<evidence type="ECO:0000255" key="1">
    <source>
        <dbReference type="PROSITE-ProRule" id="PRU00042"/>
    </source>
</evidence>
<evidence type="ECO:0000255" key="2">
    <source>
        <dbReference type="PROSITE-ProRule" id="PRU01263"/>
    </source>
</evidence>
<evidence type="ECO:0000256" key="3">
    <source>
        <dbReference type="SAM" id="MobiDB-lite"/>
    </source>
</evidence>
<evidence type="ECO:0000269" key="4">
    <source>
    </source>
</evidence>
<evidence type="ECO:0000269" key="5">
    <source>
    </source>
</evidence>
<evidence type="ECO:0000269" key="6">
    <source>
    </source>
</evidence>
<evidence type="ECO:0000303" key="7">
    <source>
    </source>
</evidence>
<evidence type="ECO:0000303" key="8">
    <source>
    </source>
</evidence>
<evidence type="ECO:0000305" key="9"/>
<accession>Q8N554</accession>
<accession>Q0VGA1</accession>
<accession>Q2TBE8</accession>
<accession>Q3B7H7</accession>
<dbReference type="EMBL" id="AF354755">
    <property type="protein sequence ID" value="AAQ15128.1"/>
    <property type="molecule type" value="mRNA"/>
</dbReference>
<dbReference type="EMBL" id="AF354756">
    <property type="protein sequence ID" value="AAQ15129.1"/>
    <property type="molecule type" value="mRNA"/>
</dbReference>
<dbReference type="EMBL" id="AC005360">
    <property type="status" value="NOT_ANNOTATED_CDS"/>
    <property type="molecule type" value="Genomic_DNA"/>
</dbReference>
<dbReference type="EMBL" id="AC010538">
    <property type="status" value="NOT_ANNOTATED_CDS"/>
    <property type="molecule type" value="Genomic_DNA"/>
</dbReference>
<dbReference type="EMBL" id="BC032781">
    <property type="protein sequence ID" value="AAH32781.2"/>
    <property type="status" value="ALT_INIT"/>
    <property type="molecule type" value="mRNA"/>
</dbReference>
<dbReference type="EMBL" id="BC107603">
    <property type="protein sequence ID" value="AAI07604.1"/>
    <property type="molecule type" value="mRNA"/>
</dbReference>
<dbReference type="EMBL" id="BC110348">
    <property type="protein sequence ID" value="AAI10349.1"/>
    <property type="status" value="ALT_INIT"/>
    <property type="molecule type" value="mRNA"/>
</dbReference>
<dbReference type="EMBL" id="AK026482">
    <property type="status" value="NOT_ANNOTATED_CDS"/>
    <property type="molecule type" value="mRNA"/>
</dbReference>
<dbReference type="CCDS" id="CCDS10986.1">
    <molecule id="Q8N554-2"/>
</dbReference>
<dbReference type="CCDS" id="CCDS45554.1">
    <molecule id="Q8N554-1"/>
</dbReference>
<dbReference type="RefSeq" id="NP_001106997.1">
    <molecule id="Q8N554-1"/>
    <property type="nucleotide sequence ID" value="NM_001113525.2"/>
</dbReference>
<dbReference type="RefSeq" id="NP_689500.2">
    <molecule id="Q8N554-2"/>
    <property type="nucleotide sequence ID" value="NM_152287.3"/>
</dbReference>
<dbReference type="RefSeq" id="XP_047290857.1">
    <molecule id="Q8N554-2"/>
    <property type="nucleotide sequence ID" value="XM_047434901.1"/>
</dbReference>
<dbReference type="SMR" id="Q8N554"/>
<dbReference type="BioGRID" id="124982">
    <property type="interactions" value="31"/>
</dbReference>
<dbReference type="FunCoup" id="Q8N554">
    <property type="interactions" value="556"/>
</dbReference>
<dbReference type="IntAct" id="Q8N554">
    <property type="interactions" value="27"/>
</dbReference>
<dbReference type="MINT" id="Q8N554"/>
<dbReference type="STRING" id="9606.ENSP00000415836"/>
<dbReference type="GlyGen" id="Q8N554">
    <property type="glycosylation" value="1 site, 1 O-linked glycan (1 site)"/>
</dbReference>
<dbReference type="iPTMnet" id="Q8N554"/>
<dbReference type="PhosphoSitePlus" id="Q8N554"/>
<dbReference type="BioMuta" id="ZNF276"/>
<dbReference type="DMDM" id="296453082"/>
<dbReference type="jPOST" id="Q8N554"/>
<dbReference type="MassIVE" id="Q8N554"/>
<dbReference type="PaxDb" id="9606-ENSP00000415836"/>
<dbReference type="PeptideAtlas" id="Q8N554"/>
<dbReference type="ProteomicsDB" id="72002">
    <molecule id="Q8N554-1"/>
</dbReference>
<dbReference type="ProteomicsDB" id="72003">
    <molecule id="Q8N554-2"/>
</dbReference>
<dbReference type="Antibodypedia" id="17483">
    <property type="antibodies" value="133 antibodies from 21 providers"/>
</dbReference>
<dbReference type="DNASU" id="92822"/>
<dbReference type="Ensembl" id="ENST00000289816.9">
    <molecule id="Q8N554-2"/>
    <property type="protein sequence ID" value="ENSP00000289816.5"/>
    <property type="gene ID" value="ENSG00000158805.12"/>
</dbReference>
<dbReference type="Ensembl" id="ENST00000443381.7">
    <molecule id="Q8N554-1"/>
    <property type="protein sequence ID" value="ENSP00000415836.2"/>
    <property type="gene ID" value="ENSG00000158805.12"/>
</dbReference>
<dbReference type="GeneID" id="92822"/>
<dbReference type="KEGG" id="hsa:92822"/>
<dbReference type="MANE-Select" id="ENST00000443381.7">
    <property type="protein sequence ID" value="ENSP00000415836.2"/>
    <property type="RefSeq nucleotide sequence ID" value="NM_001113525.2"/>
    <property type="RefSeq protein sequence ID" value="NP_001106997.1"/>
</dbReference>
<dbReference type="UCSC" id="uc002foq.5">
    <molecule id="Q8N554-1"/>
    <property type="organism name" value="human"/>
</dbReference>
<dbReference type="AGR" id="HGNC:23330"/>
<dbReference type="CTD" id="92822"/>
<dbReference type="DisGeNET" id="92822"/>
<dbReference type="GeneCards" id="ZNF276"/>
<dbReference type="HGNC" id="HGNC:23330">
    <property type="gene designation" value="ZNF276"/>
</dbReference>
<dbReference type="HPA" id="ENSG00000158805">
    <property type="expression patterns" value="Low tissue specificity"/>
</dbReference>
<dbReference type="MalaCards" id="ZNF276"/>
<dbReference type="MIM" id="608460">
    <property type="type" value="gene"/>
</dbReference>
<dbReference type="neXtProt" id="NX_Q8N554"/>
<dbReference type="OpenTargets" id="ENSG00000158805"/>
<dbReference type="PharmGKB" id="PA134935042"/>
<dbReference type="VEuPathDB" id="HostDB:ENSG00000158805"/>
<dbReference type="eggNOG" id="KOG1721">
    <property type="taxonomic scope" value="Eukaryota"/>
</dbReference>
<dbReference type="GeneTree" id="ENSGT00940000158841"/>
<dbReference type="HOGENOM" id="CLU_040755_0_0_1"/>
<dbReference type="InParanoid" id="Q8N554"/>
<dbReference type="OMA" id="LAVKWAW"/>
<dbReference type="OrthoDB" id="8823111at2759"/>
<dbReference type="PAN-GO" id="Q8N554">
    <property type="GO annotations" value="4 GO annotations based on evolutionary models"/>
</dbReference>
<dbReference type="PhylomeDB" id="Q8N554"/>
<dbReference type="TreeFam" id="TF332664"/>
<dbReference type="PathwayCommons" id="Q8N554"/>
<dbReference type="SignaLink" id="Q8N554"/>
<dbReference type="BioGRID-ORCS" id="92822">
    <property type="hits" value="24 hits in 1179 CRISPR screens"/>
</dbReference>
<dbReference type="ChiTaRS" id="ZNF276">
    <property type="organism name" value="human"/>
</dbReference>
<dbReference type="GenomeRNAi" id="92822"/>
<dbReference type="Pharos" id="Q8N554">
    <property type="development level" value="Tdark"/>
</dbReference>
<dbReference type="PRO" id="PR:Q8N554"/>
<dbReference type="Proteomes" id="UP000005640">
    <property type="component" value="Chromosome 16"/>
</dbReference>
<dbReference type="RNAct" id="Q8N554">
    <property type="molecule type" value="protein"/>
</dbReference>
<dbReference type="Bgee" id="ENSG00000158805">
    <property type="expression patterns" value="Expressed in granulocyte and 154 other cell types or tissues"/>
</dbReference>
<dbReference type="ExpressionAtlas" id="Q8N554">
    <property type="expression patterns" value="baseline and differential"/>
</dbReference>
<dbReference type="GO" id="GO:0005694">
    <property type="term" value="C:chromosome"/>
    <property type="evidence" value="ECO:0000318"/>
    <property type="project" value="GO_Central"/>
</dbReference>
<dbReference type="GO" id="GO:0000776">
    <property type="term" value="C:kinetochore"/>
    <property type="evidence" value="ECO:0000314"/>
    <property type="project" value="UniProtKB"/>
</dbReference>
<dbReference type="GO" id="GO:0005634">
    <property type="term" value="C:nucleus"/>
    <property type="evidence" value="ECO:0007669"/>
    <property type="project" value="UniProtKB-SubCell"/>
</dbReference>
<dbReference type="GO" id="GO:0043035">
    <property type="term" value="F:chromatin insulator sequence binding"/>
    <property type="evidence" value="ECO:0000318"/>
    <property type="project" value="GO_Central"/>
</dbReference>
<dbReference type="GO" id="GO:1990837">
    <property type="term" value="F:sequence-specific double-stranded DNA binding"/>
    <property type="evidence" value="ECO:0000314"/>
    <property type="project" value="ARUK-UCL"/>
</dbReference>
<dbReference type="GO" id="GO:0008270">
    <property type="term" value="F:zinc ion binding"/>
    <property type="evidence" value="ECO:0007669"/>
    <property type="project" value="UniProtKB-KW"/>
</dbReference>
<dbReference type="GO" id="GO:0006357">
    <property type="term" value="P:regulation of transcription by RNA polymerase II"/>
    <property type="evidence" value="ECO:0000318"/>
    <property type="project" value="GO_Central"/>
</dbReference>
<dbReference type="FunFam" id="3.30.160.60:FF:000219">
    <property type="entry name" value="Zinc finger protein 276"/>
    <property type="match status" value="1"/>
</dbReference>
<dbReference type="FunFam" id="3.30.160.60:FF:000400">
    <property type="entry name" value="Zinc finger protein 276"/>
    <property type="match status" value="1"/>
</dbReference>
<dbReference type="FunFam" id="3.30.160.60:FF:000503">
    <property type="entry name" value="Zinc finger protein 276"/>
    <property type="match status" value="1"/>
</dbReference>
<dbReference type="Gene3D" id="3.30.160.60">
    <property type="entry name" value="Classic Zinc Finger"/>
    <property type="match status" value="4"/>
</dbReference>
<dbReference type="InterPro" id="IPR012934">
    <property type="entry name" value="Znf_AD"/>
</dbReference>
<dbReference type="InterPro" id="IPR036236">
    <property type="entry name" value="Znf_C2H2_sf"/>
</dbReference>
<dbReference type="InterPro" id="IPR013087">
    <property type="entry name" value="Znf_C2H2_type"/>
</dbReference>
<dbReference type="PANTHER" id="PTHR24379:SF121">
    <property type="entry name" value="C2H2-TYPE DOMAIN-CONTAINING PROTEIN"/>
    <property type="match status" value="1"/>
</dbReference>
<dbReference type="PANTHER" id="PTHR24379">
    <property type="entry name" value="KRAB AND ZINC FINGER DOMAIN-CONTAINING"/>
    <property type="match status" value="1"/>
</dbReference>
<dbReference type="Pfam" id="PF07776">
    <property type="entry name" value="zf-AD"/>
    <property type="match status" value="1"/>
</dbReference>
<dbReference type="Pfam" id="PF00096">
    <property type="entry name" value="zf-C2H2"/>
    <property type="match status" value="2"/>
</dbReference>
<dbReference type="SMART" id="SM00355">
    <property type="entry name" value="ZnF_C2H2"/>
    <property type="match status" value="5"/>
</dbReference>
<dbReference type="SUPFAM" id="SSF57667">
    <property type="entry name" value="beta-beta-alpha zinc fingers"/>
    <property type="match status" value="2"/>
</dbReference>
<dbReference type="PROSITE" id="PS51915">
    <property type="entry name" value="ZAD"/>
    <property type="match status" value="1"/>
</dbReference>
<dbReference type="PROSITE" id="PS00028">
    <property type="entry name" value="ZINC_FINGER_C2H2_1"/>
    <property type="match status" value="5"/>
</dbReference>
<dbReference type="PROSITE" id="PS50157">
    <property type="entry name" value="ZINC_FINGER_C2H2_2"/>
    <property type="match status" value="4"/>
</dbReference>
<protein>
    <recommendedName>
        <fullName>Zinc finger protein 276</fullName>
        <shortName>Zfp-276</shortName>
    </recommendedName>
    <alternativeName>
        <fullName>Zinc finger protein 477</fullName>
    </alternativeName>
</protein>
<name>ZN276_HUMAN</name>
<proteinExistence type="evidence at protein level"/>
<organism>
    <name type="scientific">Homo sapiens</name>
    <name type="common">Human</name>
    <dbReference type="NCBI Taxonomy" id="9606"/>
    <lineage>
        <taxon>Eukaryota</taxon>
        <taxon>Metazoa</taxon>
        <taxon>Chordata</taxon>
        <taxon>Craniata</taxon>
        <taxon>Vertebrata</taxon>
        <taxon>Euteleostomi</taxon>
        <taxon>Mammalia</taxon>
        <taxon>Eutheria</taxon>
        <taxon>Euarchontoglires</taxon>
        <taxon>Primates</taxon>
        <taxon>Haplorrhini</taxon>
        <taxon>Catarrhini</taxon>
        <taxon>Hominidae</taxon>
        <taxon>Homo</taxon>
    </lineage>
</organism>
<comment type="function">
    <text>May be involved in transcriptional regulation.</text>
</comment>
<comment type="interaction">
    <interactant intactId="EBI-750821">
        <id>Q8N554</id>
    </interactant>
    <interactant intactId="EBI-541426">
        <id>Q9BXS5</id>
        <label>AP1M1</label>
    </interactant>
    <organismsDiffer>false</organismsDiffer>
    <experiments>3</experiments>
</comment>
<comment type="interaction">
    <interactant intactId="EBI-750821">
        <id>Q8N554</id>
    </interactant>
    <interactant intactId="EBI-930964">
        <id>P54253</id>
        <label>ATXN1</label>
    </interactant>
    <organismsDiffer>false</organismsDiffer>
    <experiments>4</experiments>
</comment>
<comment type="interaction">
    <interactant intactId="EBI-750821">
        <id>Q8N554</id>
    </interactant>
    <interactant intactId="EBI-295634">
        <id>Q16543</id>
        <label>CDC37</label>
    </interactant>
    <organismsDiffer>false</organismsDiffer>
    <experiments>3</experiments>
</comment>
<comment type="interaction">
    <interactant intactId="EBI-750821">
        <id>Q8N554</id>
    </interactant>
    <interactant intactId="EBI-10292696">
        <id>Q96Q77</id>
        <label>CIB3</label>
    </interactant>
    <organismsDiffer>false</organismsDiffer>
    <experiments>3</experiments>
</comment>
<comment type="interaction">
    <interactant intactId="EBI-750821">
        <id>Q8N554</id>
    </interactant>
    <interactant intactId="EBI-719941">
        <id>Q3B820</id>
        <label>FAM161A</label>
    </interactant>
    <organismsDiffer>false</organismsDiffer>
    <experiments>3</experiments>
</comment>
<comment type="interaction">
    <interactant intactId="EBI-750821">
        <id>Q8N554</id>
    </interactant>
    <interactant intactId="EBI-16439278">
        <id>Q6FHY5</id>
        <label>MEOX2</label>
    </interactant>
    <organismsDiffer>false</organismsDiffer>
    <experiments>3</experiments>
</comment>
<comment type="interaction">
    <interactant intactId="EBI-750821">
        <id>Q8N554</id>
    </interactant>
    <interactant intactId="EBI-10288852">
        <id>Q9UBU8-2</id>
        <label>MORF4L1</label>
    </interactant>
    <organismsDiffer>false</organismsDiffer>
    <experiments>3</experiments>
</comment>
<comment type="interaction">
    <interactant intactId="EBI-750821">
        <id>Q8N554</id>
    </interactant>
    <interactant intactId="EBI-709807">
        <id>P16118</id>
        <label>PFKFB1</label>
    </interactant>
    <organismsDiffer>false</organismsDiffer>
    <experiments>3</experiments>
</comment>
<comment type="interaction">
    <interactant intactId="EBI-750821">
        <id>Q8N554</id>
    </interactant>
    <interactant intactId="EBI-79165">
        <id>Q9NRD5</id>
        <label>PICK1</label>
    </interactant>
    <organismsDiffer>false</organismsDiffer>
    <experiments>3</experiments>
</comment>
<comment type="interaction">
    <interactant intactId="EBI-750821">
        <id>Q8N554</id>
    </interactant>
    <interactant intactId="EBI-714091">
        <id>P49903</id>
        <label>SEPHS1</label>
    </interactant>
    <organismsDiffer>false</organismsDiffer>
    <experiments>3</experiments>
</comment>
<comment type="interaction">
    <interactant intactId="EBI-750821">
        <id>Q8N554</id>
    </interactant>
    <interactant intactId="EBI-11955057">
        <id>Q8N8B7-2</id>
        <label>TCEANC</label>
    </interactant>
    <organismsDiffer>false</organismsDiffer>
    <experiments>3</experiments>
</comment>
<comment type="interaction">
    <interactant intactId="EBI-750821">
        <id>Q8N554</id>
    </interactant>
    <interactant intactId="EBI-742740">
        <id>Q96BR9</id>
        <label>ZBTB8A</label>
    </interactant>
    <organismsDiffer>false</organismsDiffer>
    <experiments>7</experiments>
</comment>
<comment type="interaction">
    <interactant intactId="EBI-10265849">
        <id>Q8N554-2</id>
    </interactant>
    <interactant intactId="EBI-746252">
        <id>Q96CN9</id>
        <label>GCC1</label>
    </interactant>
    <organismsDiffer>false</organismsDiffer>
    <experiments>3</experiments>
</comment>
<comment type="interaction">
    <interactant intactId="EBI-10265849">
        <id>Q8N554-2</id>
    </interactant>
    <interactant intactId="EBI-742740">
        <id>Q96BR9</id>
        <label>ZBTB8A</label>
    </interactant>
    <organismsDiffer>false</organismsDiffer>
    <experiments>3</experiments>
</comment>
<comment type="subcellular location">
    <subcellularLocation>
        <location evidence="9">Nucleus</location>
    </subcellularLocation>
    <subcellularLocation>
        <location evidence="6">Chromosome</location>
        <location evidence="6">Centromere</location>
        <location evidence="6">Kinetochore</location>
    </subcellularLocation>
</comment>
<comment type="alternative products">
    <event type="alternative splicing"/>
    <isoform>
        <id>Q8N554-1</id>
        <name>1</name>
        <sequence type="displayed"/>
    </isoform>
    <isoform>
        <id>Q8N554-2</id>
        <name>2</name>
        <sequence type="described" ref="VSP_026104"/>
    </isoform>
</comment>
<comment type="sequence caution" evidence="9">
    <conflict type="erroneous initiation">
        <sequence resource="EMBL-CDS" id="AAH32781"/>
    </conflict>
    <text>Extended N-terminus.</text>
</comment>
<comment type="sequence caution" evidence="9">
    <conflict type="erroneous initiation">
        <sequence resource="EMBL-CDS" id="AAI10349"/>
    </conflict>
    <text>Truncated N-terminus.</text>
</comment>
<keyword id="KW-0025">Alternative splicing</keyword>
<keyword id="KW-0137">Centromere</keyword>
<keyword id="KW-0158">Chromosome</keyword>
<keyword id="KW-0238">DNA-binding</keyword>
<keyword id="KW-0995">Kinetochore</keyword>
<keyword id="KW-0479">Metal-binding</keyword>
<keyword id="KW-0539">Nucleus</keyword>
<keyword id="KW-1267">Proteomics identification</keyword>
<keyword id="KW-1185">Reference proteome</keyword>
<keyword id="KW-0677">Repeat</keyword>
<keyword id="KW-0804">Transcription</keyword>
<keyword id="KW-0805">Transcription regulation</keyword>
<keyword id="KW-0862">Zinc</keyword>
<keyword id="KW-0863">Zinc-finger</keyword>
<reference key="1">
    <citation type="journal article" date="2003" name="J. Hum. Genet.">
        <title>Cloning and mutation analysis of ZFP276 as a candidate tumor suppressor in breast cancer.</title>
        <authorList>
            <person name="Wong J.C."/>
            <person name="Gokgoz N."/>
            <person name="Alon N."/>
            <person name="Andrulis I.L."/>
            <person name="Buchwald M."/>
        </authorList>
    </citation>
    <scope>NUCLEOTIDE SEQUENCE [MRNA] (ISOFORM 2)</scope>
    <scope>VARIANTS ARG-263; TRP-275; TRP-351 AND ASP-605</scope>
</reference>
<reference key="2">
    <citation type="journal article" date="2004" name="Nature">
        <title>The sequence and analysis of duplication-rich human chromosome 16.</title>
        <authorList>
            <person name="Martin J."/>
            <person name="Han C."/>
            <person name="Gordon L.A."/>
            <person name="Terry A."/>
            <person name="Prabhakar S."/>
            <person name="She X."/>
            <person name="Xie G."/>
            <person name="Hellsten U."/>
            <person name="Chan Y.M."/>
            <person name="Altherr M."/>
            <person name="Couronne O."/>
            <person name="Aerts A."/>
            <person name="Bajorek E."/>
            <person name="Black S."/>
            <person name="Blumer H."/>
            <person name="Branscomb E."/>
            <person name="Brown N.C."/>
            <person name="Bruno W.J."/>
            <person name="Buckingham J.M."/>
            <person name="Callen D.F."/>
            <person name="Campbell C.S."/>
            <person name="Campbell M.L."/>
            <person name="Campbell E.W."/>
            <person name="Caoile C."/>
            <person name="Challacombe J.F."/>
            <person name="Chasteen L.A."/>
            <person name="Chertkov O."/>
            <person name="Chi H.C."/>
            <person name="Christensen M."/>
            <person name="Clark L.M."/>
            <person name="Cohn J.D."/>
            <person name="Denys M."/>
            <person name="Detter J.C."/>
            <person name="Dickson M."/>
            <person name="Dimitrijevic-Bussod M."/>
            <person name="Escobar J."/>
            <person name="Fawcett J.J."/>
            <person name="Flowers D."/>
            <person name="Fotopulos D."/>
            <person name="Glavina T."/>
            <person name="Gomez M."/>
            <person name="Gonzales E."/>
            <person name="Goodstein D."/>
            <person name="Goodwin L.A."/>
            <person name="Grady D.L."/>
            <person name="Grigoriev I."/>
            <person name="Groza M."/>
            <person name="Hammon N."/>
            <person name="Hawkins T."/>
            <person name="Haydu L."/>
            <person name="Hildebrand C.E."/>
            <person name="Huang W."/>
            <person name="Israni S."/>
            <person name="Jett J."/>
            <person name="Jewett P.B."/>
            <person name="Kadner K."/>
            <person name="Kimball H."/>
            <person name="Kobayashi A."/>
            <person name="Krawczyk M.-C."/>
            <person name="Leyba T."/>
            <person name="Longmire J.L."/>
            <person name="Lopez F."/>
            <person name="Lou Y."/>
            <person name="Lowry S."/>
            <person name="Ludeman T."/>
            <person name="Manohar C.F."/>
            <person name="Mark G.A."/>
            <person name="McMurray K.L."/>
            <person name="Meincke L.J."/>
            <person name="Morgan J."/>
            <person name="Moyzis R.K."/>
            <person name="Mundt M.O."/>
            <person name="Munk A.C."/>
            <person name="Nandkeshwar R.D."/>
            <person name="Pitluck S."/>
            <person name="Pollard M."/>
            <person name="Predki P."/>
            <person name="Parson-Quintana B."/>
            <person name="Ramirez L."/>
            <person name="Rash S."/>
            <person name="Retterer J."/>
            <person name="Ricke D.O."/>
            <person name="Robinson D.L."/>
            <person name="Rodriguez A."/>
            <person name="Salamov A."/>
            <person name="Saunders E.H."/>
            <person name="Scott D."/>
            <person name="Shough T."/>
            <person name="Stallings R.L."/>
            <person name="Stalvey M."/>
            <person name="Sutherland R.D."/>
            <person name="Tapia R."/>
            <person name="Tesmer J.G."/>
            <person name="Thayer N."/>
            <person name="Thompson L.S."/>
            <person name="Tice H."/>
            <person name="Torney D.C."/>
            <person name="Tran-Gyamfi M."/>
            <person name="Tsai M."/>
            <person name="Ulanovsky L.E."/>
            <person name="Ustaszewska A."/>
            <person name="Vo N."/>
            <person name="White P.S."/>
            <person name="Williams A.L."/>
            <person name="Wills P.L."/>
            <person name="Wu J.-R."/>
            <person name="Wu K."/>
            <person name="Yang J."/>
            <person name="DeJong P."/>
            <person name="Bruce D."/>
            <person name="Doggett N.A."/>
            <person name="Deaven L."/>
            <person name="Schmutz J."/>
            <person name="Grimwood J."/>
            <person name="Richardson P."/>
            <person name="Rokhsar D.S."/>
            <person name="Eichler E.E."/>
            <person name="Gilna P."/>
            <person name="Lucas S.M."/>
            <person name="Myers R.M."/>
            <person name="Rubin E.M."/>
            <person name="Pennacchio L.A."/>
        </authorList>
    </citation>
    <scope>NUCLEOTIDE SEQUENCE [LARGE SCALE GENOMIC DNA]</scope>
</reference>
<reference key="3">
    <citation type="journal article" date="2004" name="Genome Res.">
        <title>The status, quality, and expansion of the NIH full-length cDNA project: the Mammalian Gene Collection (MGC).</title>
        <authorList>
            <consortium name="The MGC Project Team"/>
        </authorList>
    </citation>
    <scope>NUCLEOTIDE SEQUENCE [LARGE SCALE MRNA] (ISOFORM 2)</scope>
    <scope>NUCLEOTIDE SEQUENCE [LARGE SCALE MRNA] OF 64-614 (ISOFORM 1)</scope>
    <scope>VARIANT ARG-263</scope>
    <source>
        <tissue>Brain</tissue>
    </source>
</reference>
<reference key="4">
    <citation type="journal article" date="2004" name="Nat. Genet.">
        <title>Complete sequencing and characterization of 21,243 full-length human cDNAs.</title>
        <authorList>
            <person name="Ota T."/>
            <person name="Suzuki Y."/>
            <person name="Nishikawa T."/>
            <person name="Otsuki T."/>
            <person name="Sugiyama T."/>
            <person name="Irie R."/>
            <person name="Wakamatsu A."/>
            <person name="Hayashi K."/>
            <person name="Sato H."/>
            <person name="Nagai K."/>
            <person name="Kimura K."/>
            <person name="Makita H."/>
            <person name="Sekine M."/>
            <person name="Obayashi M."/>
            <person name="Nishi T."/>
            <person name="Shibahara T."/>
            <person name="Tanaka T."/>
            <person name="Ishii S."/>
            <person name="Yamamoto J."/>
            <person name="Saito K."/>
            <person name="Kawai Y."/>
            <person name="Isono Y."/>
            <person name="Nakamura Y."/>
            <person name="Nagahari K."/>
            <person name="Murakami K."/>
            <person name="Yasuda T."/>
            <person name="Iwayanagi T."/>
            <person name="Wagatsuma M."/>
            <person name="Shiratori A."/>
            <person name="Sudo H."/>
            <person name="Hosoiri T."/>
            <person name="Kaku Y."/>
            <person name="Kodaira H."/>
            <person name="Kondo H."/>
            <person name="Sugawara M."/>
            <person name="Takahashi M."/>
            <person name="Kanda K."/>
            <person name="Yokoi T."/>
            <person name="Furuya T."/>
            <person name="Kikkawa E."/>
            <person name="Omura Y."/>
            <person name="Abe K."/>
            <person name="Kamihara K."/>
            <person name="Katsuta N."/>
            <person name="Sato K."/>
            <person name="Tanikawa M."/>
            <person name="Yamazaki M."/>
            <person name="Ninomiya K."/>
            <person name="Ishibashi T."/>
            <person name="Yamashita H."/>
            <person name="Murakawa K."/>
            <person name="Fujimori K."/>
            <person name="Tanai H."/>
            <person name="Kimata M."/>
            <person name="Watanabe M."/>
            <person name="Hiraoka S."/>
            <person name="Chiba Y."/>
            <person name="Ishida S."/>
            <person name="Ono Y."/>
            <person name="Takiguchi S."/>
            <person name="Watanabe S."/>
            <person name="Yosida M."/>
            <person name="Hotuta T."/>
            <person name="Kusano J."/>
            <person name="Kanehori K."/>
            <person name="Takahashi-Fujii A."/>
            <person name="Hara H."/>
            <person name="Tanase T.-O."/>
            <person name="Nomura Y."/>
            <person name="Togiya S."/>
            <person name="Komai F."/>
            <person name="Hara R."/>
            <person name="Takeuchi K."/>
            <person name="Arita M."/>
            <person name="Imose N."/>
            <person name="Musashino K."/>
            <person name="Yuuki H."/>
            <person name="Oshima A."/>
            <person name="Sasaki N."/>
            <person name="Aotsuka S."/>
            <person name="Yoshikawa Y."/>
            <person name="Matsunawa H."/>
            <person name="Ichihara T."/>
            <person name="Shiohata N."/>
            <person name="Sano S."/>
            <person name="Moriya S."/>
            <person name="Momiyama H."/>
            <person name="Satoh N."/>
            <person name="Takami S."/>
            <person name="Terashima Y."/>
            <person name="Suzuki O."/>
            <person name="Nakagawa S."/>
            <person name="Senoh A."/>
            <person name="Mizoguchi H."/>
            <person name="Goto Y."/>
            <person name="Shimizu F."/>
            <person name="Wakebe H."/>
            <person name="Hishigaki H."/>
            <person name="Watanabe T."/>
            <person name="Sugiyama A."/>
            <person name="Takemoto M."/>
            <person name="Kawakami B."/>
            <person name="Yamazaki M."/>
            <person name="Watanabe K."/>
            <person name="Kumagai A."/>
            <person name="Itakura S."/>
            <person name="Fukuzumi Y."/>
            <person name="Fujimori Y."/>
            <person name="Komiyama M."/>
            <person name="Tashiro H."/>
            <person name="Tanigami A."/>
            <person name="Fujiwara T."/>
            <person name="Ono T."/>
            <person name="Yamada K."/>
            <person name="Fujii Y."/>
            <person name="Ozaki K."/>
            <person name="Hirao M."/>
            <person name="Ohmori Y."/>
            <person name="Kawabata A."/>
            <person name="Hikiji T."/>
            <person name="Kobatake N."/>
            <person name="Inagaki H."/>
            <person name="Ikema Y."/>
            <person name="Okamoto S."/>
            <person name="Okitani R."/>
            <person name="Kawakami T."/>
            <person name="Noguchi S."/>
            <person name="Itoh T."/>
            <person name="Shigeta K."/>
            <person name="Senba T."/>
            <person name="Matsumura K."/>
            <person name="Nakajima Y."/>
            <person name="Mizuno T."/>
            <person name="Morinaga M."/>
            <person name="Sasaki M."/>
            <person name="Togashi T."/>
            <person name="Oyama M."/>
            <person name="Hata H."/>
            <person name="Watanabe M."/>
            <person name="Komatsu T."/>
            <person name="Mizushima-Sugano J."/>
            <person name="Satoh T."/>
            <person name="Shirai Y."/>
            <person name="Takahashi Y."/>
            <person name="Nakagawa K."/>
            <person name="Okumura K."/>
            <person name="Nagase T."/>
            <person name="Nomura N."/>
            <person name="Kikuchi H."/>
            <person name="Masuho Y."/>
            <person name="Yamashita R."/>
            <person name="Nakai K."/>
            <person name="Yada T."/>
            <person name="Nakamura Y."/>
            <person name="Ohara O."/>
            <person name="Isogai T."/>
            <person name="Sugano S."/>
        </authorList>
    </citation>
    <scope>NUCLEOTIDE SEQUENCE [LARGE SCALE MRNA] OF 1-351 (ISOFORM 1)</scope>
</reference>
<reference key="5">
    <citation type="journal article" date="2008" name="Proc. Natl. Acad. Sci. U.S.A.">
        <title>A quantitative atlas of mitotic phosphorylation.</title>
        <authorList>
            <person name="Dephoure N."/>
            <person name="Zhou C."/>
            <person name="Villen J."/>
            <person name="Beausoleil S.A."/>
            <person name="Bakalarski C.E."/>
            <person name="Elledge S.J."/>
            <person name="Gygi S.P."/>
        </authorList>
    </citation>
    <scope>IDENTIFICATION BY MASS SPECTROMETRY [LARGE SCALE ANALYSIS]</scope>
    <source>
        <tissue>Cervix carcinoma</tissue>
    </source>
</reference>
<reference key="6">
    <citation type="journal article" date="2010" name="Cell">
        <title>The protein composition of mitotic chromosomes determined using multiclassifier combinatorial proteomics.</title>
        <authorList>
            <person name="Ohta S."/>
            <person name="Bukowski-Wills J.C."/>
            <person name="Sanchez-Pulido L."/>
            <person name="Alves Fde L."/>
            <person name="Wood L."/>
            <person name="Chen Z.A."/>
            <person name="Platani M."/>
            <person name="Fischer L."/>
            <person name="Hudson D.F."/>
            <person name="Ponting C.P."/>
            <person name="Fukagawa T."/>
            <person name="Earnshaw W.C."/>
            <person name="Rappsilber J."/>
        </authorList>
    </citation>
    <scope>SUBCELLULAR LOCATION</scope>
</reference>
<sequence>MKRDRLGRFLSPGSSRQCGASDGGGGVSRTRGRPSLSGGPRVDGATARRAWGPVGSCGDAGEDGADEAGAGRALAMGHCRLCHGKFSSRSLRSISERAPGASMERPSAEERVLVRDFQRLLGVAVRQDPTLSPFVCKSCHAQFYQCHSLLKSFLQRVNASPAGRRKPCAKVGAQPPTGAEEGACLVDLITSSPQCLHGLVGWVHGHAASCGALPHLQRTLSSEYCGVIQVVWGCDQGHDYTMDTSSSCKAFLLDSALAVKWPWDKETAPRLPQHRGWNPGDAPQTSQGRGTGTPVGAETKTLPSTDVAQPPSDSDAVGPRSGFPPQPSLPLCRAPGQLGEKQLPSSTSDDRVKDEFSDLSEGDVLSEDENDKKQNAQSSDESFEPYPERKVSGKKSESKEAKKSEEPRIRKKPGPKPGWKKKLRCEREELPTIYKCPYQGCTAVYRGADGMKKHIKEHHEEVRERPCPHPGCNKVFMIDRYLQRHVKLIHTEVRNYICDECGQTFKQRKHLLVHQMRHSGAKPLQCEVCGFQCRQRASLKYHMTKHKAETELDFACDQCGRRFEKAHNLNVHMSMVHPLTQTQDKALPLEAEPPPGPPSPSVTTEGQAVKPEPT</sequence>
<feature type="chain" id="PRO_0000047323" description="Zinc finger protein 276">
    <location>
        <begin position="1"/>
        <end position="614"/>
    </location>
</feature>
<feature type="domain" description="ZAD" evidence="2">
    <location>
        <begin position="77"/>
        <end position="163"/>
    </location>
</feature>
<feature type="zinc finger region" description="C2H2-type 1" evidence="1">
    <location>
        <begin position="434"/>
        <end position="458"/>
    </location>
</feature>
<feature type="zinc finger region" description="C2H2-type 2" evidence="1">
    <location>
        <begin position="465"/>
        <end position="490"/>
    </location>
</feature>
<feature type="zinc finger region" description="C2H2-type 3" evidence="1">
    <location>
        <begin position="496"/>
        <end position="518"/>
    </location>
</feature>
<feature type="zinc finger region" description="C2H2-type 4" evidence="1">
    <location>
        <begin position="524"/>
        <end position="546"/>
    </location>
</feature>
<feature type="zinc finger region" description="C2H2-type 5" evidence="1">
    <location>
        <begin position="554"/>
        <end position="577"/>
    </location>
</feature>
<feature type="region of interest" description="Disordered" evidence="3">
    <location>
        <begin position="1"/>
        <end position="50"/>
    </location>
</feature>
<feature type="region of interest" description="Disordered" evidence="3">
    <location>
        <begin position="268"/>
        <end position="420"/>
    </location>
</feature>
<feature type="region of interest" description="Disordered" evidence="3">
    <location>
        <begin position="583"/>
        <end position="614"/>
    </location>
</feature>
<feature type="compositionally biased region" description="Acidic residues" evidence="3">
    <location>
        <begin position="357"/>
        <end position="369"/>
    </location>
</feature>
<feature type="compositionally biased region" description="Basic and acidic residues" evidence="3">
    <location>
        <begin position="386"/>
        <end position="408"/>
    </location>
</feature>
<feature type="compositionally biased region" description="Basic residues" evidence="3">
    <location>
        <begin position="409"/>
        <end position="420"/>
    </location>
</feature>
<feature type="compositionally biased region" description="Pro residues" evidence="3">
    <location>
        <begin position="591"/>
        <end position="600"/>
    </location>
</feature>
<feature type="binding site" evidence="2">
    <location>
        <position position="79"/>
    </location>
    <ligand>
        <name>Zn(2+)</name>
        <dbReference type="ChEBI" id="CHEBI:29105"/>
    </ligand>
</feature>
<feature type="binding site" evidence="2">
    <location>
        <position position="82"/>
    </location>
    <ligand>
        <name>Zn(2+)</name>
        <dbReference type="ChEBI" id="CHEBI:29105"/>
    </ligand>
</feature>
<feature type="binding site" evidence="2">
    <location>
        <position position="136"/>
    </location>
    <ligand>
        <name>Zn(2+)</name>
        <dbReference type="ChEBI" id="CHEBI:29105"/>
    </ligand>
</feature>
<feature type="binding site" evidence="2">
    <location>
        <position position="139"/>
    </location>
    <ligand>
        <name>Zn(2+)</name>
        <dbReference type="ChEBI" id="CHEBI:29105"/>
    </ligand>
</feature>
<feature type="splice variant" id="VSP_026104" description="In isoform 2." evidence="7 8">
    <location>
        <begin position="1"/>
        <end position="75"/>
    </location>
</feature>
<feature type="sequence variant" id="VAR_032708" description="In dbSNP:rs6500437." evidence="4 5">
    <original>W</original>
    <variation>R</variation>
    <location>
        <position position="263"/>
    </location>
</feature>
<feature type="sequence variant" id="VAR_019125" description="May increase breast cancer risk." evidence="4">
    <original>R</original>
    <variation>W</variation>
    <location>
        <position position="275"/>
    </location>
</feature>
<feature type="sequence variant" id="VAR_032709" description="In dbSNP:rs17719249." evidence="4">
    <original>R</original>
    <variation>W</variation>
    <location>
        <position position="351"/>
    </location>
</feature>
<feature type="sequence variant" id="VAR_019126" description="In dbSNP:rs17227424." evidence="4">
    <original>E</original>
    <variation>D</variation>
    <location>
        <position position="605"/>
    </location>
</feature>
<feature type="sequence conflict" description="In Ref. 2; AK026482." evidence="9" ref="2">
    <original>E</original>
    <variation>V</variation>
    <location>
        <position position="104"/>
    </location>
</feature>
<feature type="sequence conflict" description="In Ref. 2; AK026482." evidence="9" ref="2">
    <original>E</original>
    <variation>G</variation>
    <location>
        <position position="180"/>
    </location>
</feature>
<feature type="sequence conflict" description="In Ref. 3; AAQ15128/AAQ15129." evidence="9" ref="3">
    <original>P</original>
    <variation>Q</variation>
    <location>
        <position position="413"/>
    </location>
</feature>
<feature type="sequence conflict" description="In Ref. 1; AAI07604." evidence="9" ref="1">
    <original>Y</original>
    <variation>H</variation>
    <location>
        <position position="434"/>
    </location>
</feature>
<gene>
    <name type="primary">ZNF276</name>
    <name type="synonym">CENP-Z</name>
    <name type="synonym">ZFP276</name>
    <name type="synonym">ZNF477</name>
</gene>